<dbReference type="EC" id="6.1.1.11" evidence="1"/>
<dbReference type="EMBL" id="CP000529">
    <property type="protein sequence ID" value="ABM38632.1"/>
    <property type="molecule type" value="Genomic_DNA"/>
</dbReference>
<dbReference type="RefSeq" id="WP_011802703.1">
    <property type="nucleotide sequence ID" value="NC_008781.1"/>
</dbReference>
<dbReference type="SMR" id="A1VSK4"/>
<dbReference type="STRING" id="365044.Pnap_3335"/>
<dbReference type="KEGG" id="pna:Pnap_3335"/>
<dbReference type="eggNOG" id="COG0172">
    <property type="taxonomic scope" value="Bacteria"/>
</dbReference>
<dbReference type="HOGENOM" id="CLU_023797_1_1_4"/>
<dbReference type="OrthoDB" id="9804647at2"/>
<dbReference type="UniPathway" id="UPA00906">
    <property type="reaction ID" value="UER00895"/>
</dbReference>
<dbReference type="Proteomes" id="UP000000644">
    <property type="component" value="Chromosome"/>
</dbReference>
<dbReference type="GO" id="GO:0005737">
    <property type="term" value="C:cytoplasm"/>
    <property type="evidence" value="ECO:0007669"/>
    <property type="project" value="UniProtKB-SubCell"/>
</dbReference>
<dbReference type="GO" id="GO:0005524">
    <property type="term" value="F:ATP binding"/>
    <property type="evidence" value="ECO:0007669"/>
    <property type="project" value="UniProtKB-UniRule"/>
</dbReference>
<dbReference type="GO" id="GO:0004828">
    <property type="term" value="F:serine-tRNA ligase activity"/>
    <property type="evidence" value="ECO:0007669"/>
    <property type="project" value="UniProtKB-UniRule"/>
</dbReference>
<dbReference type="GO" id="GO:0016260">
    <property type="term" value="P:selenocysteine biosynthetic process"/>
    <property type="evidence" value="ECO:0007669"/>
    <property type="project" value="UniProtKB-UniRule"/>
</dbReference>
<dbReference type="GO" id="GO:0006434">
    <property type="term" value="P:seryl-tRNA aminoacylation"/>
    <property type="evidence" value="ECO:0007669"/>
    <property type="project" value="UniProtKB-UniRule"/>
</dbReference>
<dbReference type="CDD" id="cd00770">
    <property type="entry name" value="SerRS_core"/>
    <property type="match status" value="1"/>
</dbReference>
<dbReference type="Gene3D" id="3.30.930.10">
    <property type="entry name" value="Bira Bifunctional Protein, Domain 2"/>
    <property type="match status" value="1"/>
</dbReference>
<dbReference type="Gene3D" id="1.10.287.40">
    <property type="entry name" value="Serine-tRNA synthetase, tRNA binding domain"/>
    <property type="match status" value="1"/>
</dbReference>
<dbReference type="HAMAP" id="MF_00176">
    <property type="entry name" value="Ser_tRNA_synth_type1"/>
    <property type="match status" value="1"/>
</dbReference>
<dbReference type="InterPro" id="IPR002314">
    <property type="entry name" value="aa-tRNA-synt_IIb"/>
</dbReference>
<dbReference type="InterPro" id="IPR006195">
    <property type="entry name" value="aa-tRNA-synth_II"/>
</dbReference>
<dbReference type="InterPro" id="IPR045864">
    <property type="entry name" value="aa-tRNA-synth_II/BPL/LPL"/>
</dbReference>
<dbReference type="InterPro" id="IPR002317">
    <property type="entry name" value="Ser-tRNA-ligase_type_1"/>
</dbReference>
<dbReference type="InterPro" id="IPR015866">
    <property type="entry name" value="Ser-tRNA-synth_1_N"/>
</dbReference>
<dbReference type="InterPro" id="IPR042103">
    <property type="entry name" value="SerRS_1_N_sf"/>
</dbReference>
<dbReference type="InterPro" id="IPR033729">
    <property type="entry name" value="SerRS_core"/>
</dbReference>
<dbReference type="InterPro" id="IPR010978">
    <property type="entry name" value="tRNA-bd_arm"/>
</dbReference>
<dbReference type="NCBIfam" id="TIGR00414">
    <property type="entry name" value="serS"/>
    <property type="match status" value="1"/>
</dbReference>
<dbReference type="PANTHER" id="PTHR43697:SF1">
    <property type="entry name" value="SERINE--TRNA LIGASE"/>
    <property type="match status" value="1"/>
</dbReference>
<dbReference type="PANTHER" id="PTHR43697">
    <property type="entry name" value="SERYL-TRNA SYNTHETASE"/>
    <property type="match status" value="1"/>
</dbReference>
<dbReference type="Pfam" id="PF02403">
    <property type="entry name" value="Seryl_tRNA_N"/>
    <property type="match status" value="1"/>
</dbReference>
<dbReference type="Pfam" id="PF00587">
    <property type="entry name" value="tRNA-synt_2b"/>
    <property type="match status" value="1"/>
</dbReference>
<dbReference type="PIRSF" id="PIRSF001529">
    <property type="entry name" value="Ser-tRNA-synth_IIa"/>
    <property type="match status" value="1"/>
</dbReference>
<dbReference type="PRINTS" id="PR00981">
    <property type="entry name" value="TRNASYNTHSER"/>
</dbReference>
<dbReference type="SUPFAM" id="SSF55681">
    <property type="entry name" value="Class II aaRS and biotin synthetases"/>
    <property type="match status" value="1"/>
</dbReference>
<dbReference type="SUPFAM" id="SSF46589">
    <property type="entry name" value="tRNA-binding arm"/>
    <property type="match status" value="1"/>
</dbReference>
<dbReference type="PROSITE" id="PS50862">
    <property type="entry name" value="AA_TRNA_LIGASE_II"/>
    <property type="match status" value="1"/>
</dbReference>
<sequence>MLDINLLRKDLPSAIARLETRKSPQTFLNVEAFQTLEAERKAVQIRTEELQGQRGTLSKQIGQLKSKGEDASAVMALVSHSKAELESSAKRLEQIQTEMQALLLAVPNLPHDSVPQGIGEAGNVEVRKWSPFEGLGGEPAALSFEPRDHVDVGQPLGLDFELGTKLTGSRFTVMKGPLARLHRALSQFMLDVQTAEHGYTECYVPYIVNSDSLRGTGQLPKFEEDLFAARKGGQEGQAENAALYLIPTSEVPLTNFVRDEVVPEAQLPLKFTAHTPCFRSEAGSYGRDTRGMIRQHQFDKVEMVQVVHPEKSYEALEAMTGHAEVILQKLGLPYRVMLLCTGDMGFGATKTYDLEVWLPAQSTYREISSVSNCEAFQARRLQARFKNAQGKNEFVHTLNGSGLAVGRTLVAVLENYQRADGGVDIPAVLQPYMGGMTTLSLPAA</sequence>
<accession>A1VSK4</accession>
<name>SYS_POLNA</name>
<reference key="1">
    <citation type="journal article" date="2009" name="Environ. Microbiol.">
        <title>The genome of Polaromonas naphthalenivorans strain CJ2, isolated from coal tar-contaminated sediment, reveals physiological and metabolic versatility and evolution through extensive horizontal gene transfer.</title>
        <authorList>
            <person name="Yagi J.M."/>
            <person name="Sims D."/>
            <person name="Brettin T."/>
            <person name="Bruce D."/>
            <person name="Madsen E.L."/>
        </authorList>
    </citation>
    <scope>NUCLEOTIDE SEQUENCE [LARGE SCALE GENOMIC DNA]</scope>
    <source>
        <strain>CJ2</strain>
    </source>
</reference>
<evidence type="ECO:0000255" key="1">
    <source>
        <dbReference type="HAMAP-Rule" id="MF_00176"/>
    </source>
</evidence>
<proteinExistence type="inferred from homology"/>
<keyword id="KW-0030">Aminoacyl-tRNA synthetase</keyword>
<keyword id="KW-0067">ATP-binding</keyword>
<keyword id="KW-0963">Cytoplasm</keyword>
<keyword id="KW-0436">Ligase</keyword>
<keyword id="KW-0547">Nucleotide-binding</keyword>
<keyword id="KW-0648">Protein biosynthesis</keyword>
<keyword id="KW-1185">Reference proteome</keyword>
<comment type="function">
    <text evidence="1">Catalyzes the attachment of serine to tRNA(Ser). Is also able to aminoacylate tRNA(Sec) with serine, to form the misacylated tRNA L-seryl-tRNA(Sec), which will be further converted into selenocysteinyl-tRNA(Sec).</text>
</comment>
<comment type="catalytic activity">
    <reaction evidence="1">
        <text>tRNA(Ser) + L-serine + ATP = L-seryl-tRNA(Ser) + AMP + diphosphate + H(+)</text>
        <dbReference type="Rhea" id="RHEA:12292"/>
        <dbReference type="Rhea" id="RHEA-COMP:9669"/>
        <dbReference type="Rhea" id="RHEA-COMP:9703"/>
        <dbReference type="ChEBI" id="CHEBI:15378"/>
        <dbReference type="ChEBI" id="CHEBI:30616"/>
        <dbReference type="ChEBI" id="CHEBI:33019"/>
        <dbReference type="ChEBI" id="CHEBI:33384"/>
        <dbReference type="ChEBI" id="CHEBI:78442"/>
        <dbReference type="ChEBI" id="CHEBI:78533"/>
        <dbReference type="ChEBI" id="CHEBI:456215"/>
        <dbReference type="EC" id="6.1.1.11"/>
    </reaction>
</comment>
<comment type="catalytic activity">
    <reaction evidence="1">
        <text>tRNA(Sec) + L-serine + ATP = L-seryl-tRNA(Sec) + AMP + diphosphate + H(+)</text>
        <dbReference type="Rhea" id="RHEA:42580"/>
        <dbReference type="Rhea" id="RHEA-COMP:9742"/>
        <dbReference type="Rhea" id="RHEA-COMP:10128"/>
        <dbReference type="ChEBI" id="CHEBI:15378"/>
        <dbReference type="ChEBI" id="CHEBI:30616"/>
        <dbReference type="ChEBI" id="CHEBI:33019"/>
        <dbReference type="ChEBI" id="CHEBI:33384"/>
        <dbReference type="ChEBI" id="CHEBI:78442"/>
        <dbReference type="ChEBI" id="CHEBI:78533"/>
        <dbReference type="ChEBI" id="CHEBI:456215"/>
        <dbReference type="EC" id="6.1.1.11"/>
    </reaction>
</comment>
<comment type="pathway">
    <text evidence="1">Aminoacyl-tRNA biosynthesis; selenocysteinyl-tRNA(Sec) biosynthesis; L-seryl-tRNA(Sec) from L-serine and tRNA(Sec): step 1/1.</text>
</comment>
<comment type="subunit">
    <text evidence="1">Homodimer. The tRNA molecule binds across the dimer.</text>
</comment>
<comment type="subcellular location">
    <subcellularLocation>
        <location evidence="1">Cytoplasm</location>
    </subcellularLocation>
</comment>
<comment type="domain">
    <text evidence="1">Consists of two distinct domains, a catalytic core and a N-terminal extension that is involved in tRNA binding.</text>
</comment>
<comment type="similarity">
    <text evidence="1">Belongs to the class-II aminoacyl-tRNA synthetase family. Type-1 seryl-tRNA synthetase subfamily.</text>
</comment>
<feature type="chain" id="PRO_1000019762" description="Serine--tRNA ligase">
    <location>
        <begin position="1"/>
        <end position="444"/>
    </location>
</feature>
<feature type="binding site" evidence="1">
    <location>
        <begin position="248"/>
        <end position="250"/>
    </location>
    <ligand>
        <name>L-serine</name>
        <dbReference type="ChEBI" id="CHEBI:33384"/>
    </ligand>
</feature>
<feature type="binding site" evidence="1">
    <location>
        <begin position="279"/>
        <end position="281"/>
    </location>
    <ligand>
        <name>ATP</name>
        <dbReference type="ChEBI" id="CHEBI:30616"/>
    </ligand>
</feature>
<feature type="binding site" evidence="1">
    <location>
        <position position="302"/>
    </location>
    <ligand>
        <name>L-serine</name>
        <dbReference type="ChEBI" id="CHEBI:33384"/>
    </ligand>
</feature>
<feature type="binding site" evidence="1">
    <location>
        <begin position="366"/>
        <end position="369"/>
    </location>
    <ligand>
        <name>ATP</name>
        <dbReference type="ChEBI" id="CHEBI:30616"/>
    </ligand>
</feature>
<feature type="binding site" evidence="1">
    <location>
        <position position="401"/>
    </location>
    <ligand>
        <name>L-serine</name>
        <dbReference type="ChEBI" id="CHEBI:33384"/>
    </ligand>
</feature>
<gene>
    <name evidence="1" type="primary">serS</name>
    <name type="ordered locus">Pnap_3335</name>
</gene>
<organism>
    <name type="scientific">Polaromonas naphthalenivorans (strain CJ2)</name>
    <dbReference type="NCBI Taxonomy" id="365044"/>
    <lineage>
        <taxon>Bacteria</taxon>
        <taxon>Pseudomonadati</taxon>
        <taxon>Pseudomonadota</taxon>
        <taxon>Betaproteobacteria</taxon>
        <taxon>Burkholderiales</taxon>
        <taxon>Comamonadaceae</taxon>
        <taxon>Polaromonas</taxon>
    </lineage>
</organism>
<protein>
    <recommendedName>
        <fullName evidence="1">Serine--tRNA ligase</fullName>
        <ecNumber evidence="1">6.1.1.11</ecNumber>
    </recommendedName>
    <alternativeName>
        <fullName evidence="1">Seryl-tRNA synthetase</fullName>
        <shortName evidence="1">SerRS</shortName>
    </alternativeName>
    <alternativeName>
        <fullName evidence="1">Seryl-tRNA(Ser/Sec) synthetase</fullName>
    </alternativeName>
</protein>